<evidence type="ECO:0000250" key="1">
    <source>
        <dbReference type="UniProtKB" id="Q02108"/>
    </source>
</evidence>
<evidence type="ECO:0000250" key="2">
    <source>
        <dbReference type="UniProtKB" id="Q9ERL9"/>
    </source>
</evidence>
<evidence type="ECO:0000255" key="3">
    <source>
        <dbReference type="PROSITE-ProRule" id="PRU00099"/>
    </source>
</evidence>
<evidence type="ECO:0000305" key="4"/>
<accession>P19686</accession>
<gene>
    <name type="primary">Gucy1a1</name>
    <name type="synonym">Guc1a1</name>
    <name type="synonym">Gucy1a3</name>
</gene>
<sequence>MFCRKFKDLKITGECPFSLLAPGQVPTEPIEEVAGVSESCQATLPTCQEFAENAEGSHPQRKTSRNRVYLHTLAESIGKLIFPEFERLNLALQRTLAKHKIKENRNSSEKEDLERIIAEEAIAAGVPVEVLKDSLGEELFKICYEEDEHILGVVGGTLKDFLNSFSTLLKQSSHCQEAERRGRLEDASILCLDKDQDFLNVYYFFPKRTTALLLPGIIKAAARILYESHVEVSLMPPCFRSECTEFVNQPYLLYSVHVKSTKPSLSPGKPQSSLVIPTSLFCKTFPFHFMLDRDLAILQLGNGIRRLVNKRDFQGKPNFEEFFEILTPKINQTFSGIMTMLNMQFVIRVRRWDNLVKKSSRVMDLKGQMIYIVESSAILFLGSPCVDRLEDFTGRGLYLSDIPIHNALRDVVLIGEQARAQDGLKKRLGKLKATLEHAHQALEEEKKKTVDLLCSIFPSEVAQQLWQGQIVQAKKFNEVTMLFSDIVGFTAICSQCSPLQVITMLNALYTRFDQQCGELDVYKVETIGDAYCVAGGLHRESDTHAVQIALMALKMMELSNEVMSPHGEPIKMRIGLHSGSVFAGVVGVKMPRYCLFGNNVTLANKFESCSVPRKINVSPTTYRLLKDCPGFVFTPRSREELPPNFPSDIPGICHFLDAYQHQGPNSKPWFQQKDAEDGNANFLGKASGVD</sequence>
<dbReference type="EC" id="4.6.1.2" evidence="1"/>
<dbReference type="EMBL" id="M57405">
    <property type="protein sequence ID" value="AAA41206.1"/>
    <property type="molecule type" value="mRNA"/>
</dbReference>
<dbReference type="EMBL" id="U60835">
    <property type="protein sequence ID" value="AAB17953.1"/>
    <property type="molecule type" value="mRNA"/>
</dbReference>
<dbReference type="PIR" id="A38297">
    <property type="entry name" value="OYRTA1"/>
</dbReference>
<dbReference type="SMR" id="P19686"/>
<dbReference type="CORUM" id="P19686"/>
<dbReference type="FunCoup" id="P19686">
    <property type="interactions" value="1388"/>
</dbReference>
<dbReference type="IntAct" id="P19686">
    <property type="interactions" value="2"/>
</dbReference>
<dbReference type="STRING" id="10116.ENSRNOP00000017190"/>
<dbReference type="ChEMBL" id="CHEMBL4105800"/>
<dbReference type="iPTMnet" id="P19686"/>
<dbReference type="PhosphoSitePlus" id="P19686"/>
<dbReference type="jPOST" id="P19686"/>
<dbReference type="PaxDb" id="10116-ENSRNOP00000017190"/>
<dbReference type="UCSC" id="RGD:68436">
    <property type="organism name" value="rat"/>
</dbReference>
<dbReference type="AGR" id="RGD:68436"/>
<dbReference type="RGD" id="68436">
    <property type="gene designation" value="Gucy1a1"/>
</dbReference>
<dbReference type="eggNOG" id="KOG4171">
    <property type="taxonomic scope" value="Eukaryota"/>
</dbReference>
<dbReference type="InParanoid" id="P19686"/>
<dbReference type="OrthoDB" id="6127067at2759"/>
<dbReference type="BRENDA" id="4.6.1.2">
    <property type="organism ID" value="5301"/>
</dbReference>
<dbReference type="Reactome" id="R-RNO-445355">
    <property type="pathway name" value="Smooth Muscle Contraction"/>
</dbReference>
<dbReference type="PRO" id="PR:P19686"/>
<dbReference type="Proteomes" id="UP000002494">
    <property type="component" value="Unplaced"/>
</dbReference>
<dbReference type="GO" id="GO:0098982">
    <property type="term" value="C:GABA-ergic synapse"/>
    <property type="evidence" value="ECO:0000266"/>
    <property type="project" value="RGD"/>
</dbReference>
<dbReference type="GO" id="GO:0098978">
    <property type="term" value="C:glutamatergic synapse"/>
    <property type="evidence" value="ECO:0000266"/>
    <property type="project" value="RGD"/>
</dbReference>
<dbReference type="GO" id="GO:0008074">
    <property type="term" value="C:guanylate cyclase complex, soluble"/>
    <property type="evidence" value="ECO:0000314"/>
    <property type="project" value="RGD"/>
</dbReference>
<dbReference type="GO" id="GO:0032991">
    <property type="term" value="C:protein-containing complex"/>
    <property type="evidence" value="ECO:0000314"/>
    <property type="project" value="RGD"/>
</dbReference>
<dbReference type="GO" id="GO:0005525">
    <property type="term" value="F:GTP binding"/>
    <property type="evidence" value="ECO:0007669"/>
    <property type="project" value="UniProtKB-KW"/>
</dbReference>
<dbReference type="GO" id="GO:0004383">
    <property type="term" value="F:guanylate cyclase activity"/>
    <property type="evidence" value="ECO:0000266"/>
    <property type="project" value="RGD"/>
</dbReference>
<dbReference type="GO" id="GO:0020037">
    <property type="term" value="F:heme binding"/>
    <property type="evidence" value="ECO:0007669"/>
    <property type="project" value="InterPro"/>
</dbReference>
<dbReference type="GO" id="GO:0070026">
    <property type="term" value="F:nitric oxide binding"/>
    <property type="evidence" value="ECO:0000314"/>
    <property type="project" value="RGD"/>
</dbReference>
<dbReference type="GO" id="GO:0044877">
    <property type="term" value="F:protein-containing complex binding"/>
    <property type="evidence" value="ECO:0000314"/>
    <property type="project" value="RGD"/>
</dbReference>
<dbReference type="GO" id="GO:0006182">
    <property type="term" value="P:cGMP biosynthetic process"/>
    <property type="evidence" value="ECO:0000266"/>
    <property type="project" value="RGD"/>
</dbReference>
<dbReference type="GO" id="GO:0019934">
    <property type="term" value="P:cGMP-mediated signaling"/>
    <property type="evidence" value="ECO:0000318"/>
    <property type="project" value="GO_Central"/>
</dbReference>
<dbReference type="GO" id="GO:0007263">
    <property type="term" value="P:nitric oxide mediated signal transduction"/>
    <property type="evidence" value="ECO:0000266"/>
    <property type="project" value="RGD"/>
</dbReference>
<dbReference type="GO" id="GO:0038060">
    <property type="term" value="P:nitric oxide-cGMP-mediated signaling"/>
    <property type="evidence" value="ECO:0000266"/>
    <property type="project" value="RGD"/>
</dbReference>
<dbReference type="GO" id="GO:0010750">
    <property type="term" value="P:positive regulation of nitric oxide mediated signal transduction"/>
    <property type="evidence" value="ECO:0000266"/>
    <property type="project" value="RGD"/>
</dbReference>
<dbReference type="GO" id="GO:0008217">
    <property type="term" value="P:regulation of blood pressure"/>
    <property type="evidence" value="ECO:0000266"/>
    <property type="project" value="RGD"/>
</dbReference>
<dbReference type="GO" id="GO:0060087">
    <property type="term" value="P:relaxation of vascular associated smooth muscle"/>
    <property type="evidence" value="ECO:0000266"/>
    <property type="project" value="RGD"/>
</dbReference>
<dbReference type="GO" id="GO:0009635">
    <property type="term" value="P:response to herbicide"/>
    <property type="evidence" value="ECO:0000270"/>
    <property type="project" value="RGD"/>
</dbReference>
<dbReference type="GO" id="GO:0070482">
    <property type="term" value="P:response to oxygen levels"/>
    <property type="evidence" value="ECO:0000318"/>
    <property type="project" value="GO_Central"/>
</dbReference>
<dbReference type="GO" id="GO:0098925">
    <property type="term" value="P:retrograde trans-synaptic signaling by nitric oxide, modulating synaptic transmission"/>
    <property type="evidence" value="ECO:0000266"/>
    <property type="project" value="RGD"/>
</dbReference>
<dbReference type="CDD" id="cd07302">
    <property type="entry name" value="CHD"/>
    <property type="match status" value="1"/>
</dbReference>
<dbReference type="FunFam" id="3.30.450.260:FF:000002">
    <property type="entry name" value="guanylate cyclase soluble subunit alpha-2"/>
    <property type="match status" value="1"/>
</dbReference>
<dbReference type="FunFam" id="3.30.70.1230:FF:000007">
    <property type="entry name" value="Guanylate cyclase soluble subunit alpha-3"/>
    <property type="match status" value="1"/>
</dbReference>
<dbReference type="FunFam" id="3.90.1520.10:FF:000002">
    <property type="entry name" value="Guanylate cyclase soluble subunit alpha-3 isoform A"/>
    <property type="match status" value="1"/>
</dbReference>
<dbReference type="Gene3D" id="6.10.250.780">
    <property type="match status" value="1"/>
</dbReference>
<dbReference type="Gene3D" id="3.90.1520.10">
    <property type="entry name" value="H-NOX domain"/>
    <property type="match status" value="1"/>
</dbReference>
<dbReference type="Gene3D" id="3.30.450.260">
    <property type="entry name" value="Haem NO binding associated domain"/>
    <property type="match status" value="1"/>
</dbReference>
<dbReference type="Gene3D" id="3.30.70.1230">
    <property type="entry name" value="Nucleotide cyclase"/>
    <property type="match status" value="1"/>
</dbReference>
<dbReference type="InterPro" id="IPR001054">
    <property type="entry name" value="A/G_cyclase"/>
</dbReference>
<dbReference type="InterPro" id="IPR018297">
    <property type="entry name" value="A/G_cyclase_CS"/>
</dbReference>
<dbReference type="InterPro" id="IPR038158">
    <property type="entry name" value="H-NOX_domain_sf"/>
</dbReference>
<dbReference type="InterPro" id="IPR011645">
    <property type="entry name" value="HNOB_dom_associated"/>
</dbReference>
<dbReference type="InterPro" id="IPR042463">
    <property type="entry name" value="HNOB_dom_associated_sf"/>
</dbReference>
<dbReference type="InterPro" id="IPR024096">
    <property type="entry name" value="NO_sig/Golgi_transp_ligand-bd"/>
</dbReference>
<dbReference type="InterPro" id="IPR029787">
    <property type="entry name" value="Nucleotide_cyclase"/>
</dbReference>
<dbReference type="PANTHER" id="PTHR45655:SF4">
    <property type="entry name" value="GUANYLATE CYCLASE SOLUBLE SUBUNIT ALPHA-1"/>
    <property type="match status" value="1"/>
</dbReference>
<dbReference type="PANTHER" id="PTHR45655">
    <property type="entry name" value="GUANYLATE CYCLASE SOLUBLE SUBUNIT BETA-2"/>
    <property type="match status" value="1"/>
</dbReference>
<dbReference type="Pfam" id="PF00211">
    <property type="entry name" value="Guanylate_cyc"/>
    <property type="match status" value="1"/>
</dbReference>
<dbReference type="Pfam" id="PF07701">
    <property type="entry name" value="HNOBA"/>
    <property type="match status" value="1"/>
</dbReference>
<dbReference type="SMART" id="SM00044">
    <property type="entry name" value="CYCc"/>
    <property type="match status" value="1"/>
</dbReference>
<dbReference type="SUPFAM" id="SSF111126">
    <property type="entry name" value="Ligand-binding domain in the NO signalling and Golgi transport"/>
    <property type="match status" value="1"/>
</dbReference>
<dbReference type="SUPFAM" id="SSF55073">
    <property type="entry name" value="Nucleotide cyclase"/>
    <property type="match status" value="1"/>
</dbReference>
<dbReference type="PROSITE" id="PS00452">
    <property type="entry name" value="GUANYLATE_CYCLASE_1"/>
    <property type="match status" value="1"/>
</dbReference>
<dbReference type="PROSITE" id="PS50125">
    <property type="entry name" value="GUANYLATE_CYCLASE_2"/>
    <property type="match status" value="1"/>
</dbReference>
<reference key="1">
    <citation type="journal article" date="1990" name="J. Biol. Chem.">
        <title>Molecular cloning and expression of cDNAs coding for soluble guanylate cyclase from rat lung.</title>
        <authorList>
            <person name="Nakane M."/>
            <person name="Arai K."/>
            <person name="Saheki S."/>
            <person name="Kuno T."/>
            <person name="Buechler W."/>
            <person name="Murad F."/>
        </authorList>
    </citation>
    <scope>NUCLEOTIDE SEQUENCE [MRNA]</scope>
    <scope>PARTIAL PROTEIN SEQUENCE</scope>
    <source>
        <tissue>Lung</tissue>
    </source>
</reference>
<reference key="2">
    <citation type="journal article" date="1996" name="Brain Res. Dev. Brain Res.">
        <title>The alpha 1 subunit of soluble guanylyl cyclase is expressed prenatally in the rat brain.</title>
        <authorList>
            <person name="Smigrodzki R.M."/>
            <person name="Levitt P."/>
        </authorList>
    </citation>
    <scope>NUCLEOTIDE SEQUENCE [MRNA]</scope>
    <source>
        <strain>Sprague-Dawley</strain>
        <tissue>Corpus striatum</tissue>
    </source>
</reference>
<organism>
    <name type="scientific">Rattus norvegicus</name>
    <name type="common">Rat</name>
    <dbReference type="NCBI Taxonomy" id="10116"/>
    <lineage>
        <taxon>Eukaryota</taxon>
        <taxon>Metazoa</taxon>
        <taxon>Chordata</taxon>
        <taxon>Craniata</taxon>
        <taxon>Vertebrata</taxon>
        <taxon>Euteleostomi</taxon>
        <taxon>Mammalia</taxon>
        <taxon>Eutheria</taxon>
        <taxon>Euarchontoglires</taxon>
        <taxon>Glires</taxon>
        <taxon>Rodentia</taxon>
        <taxon>Myomorpha</taxon>
        <taxon>Muroidea</taxon>
        <taxon>Muridae</taxon>
        <taxon>Murinae</taxon>
        <taxon>Rattus</taxon>
    </lineage>
</organism>
<protein>
    <recommendedName>
        <fullName>Guanylate cyclase soluble subunit alpha-1</fullName>
        <shortName>GCS-alpha-1</shortName>
        <ecNumber evidence="1">4.6.1.2</ecNumber>
    </recommendedName>
    <alternativeName>
        <fullName>Guanylate cyclase soluble subunit alpha-3</fullName>
        <shortName>GCS-alpha-3</shortName>
    </alternativeName>
    <alternativeName>
        <fullName>Soluble guanylate cyclase large subunit</fullName>
    </alternativeName>
</protein>
<proteinExistence type="evidence at protein level"/>
<comment type="catalytic activity">
    <reaction evidence="1">
        <text>GTP = 3',5'-cyclic GMP + diphosphate</text>
        <dbReference type="Rhea" id="RHEA:13665"/>
        <dbReference type="ChEBI" id="CHEBI:33019"/>
        <dbReference type="ChEBI" id="CHEBI:37565"/>
        <dbReference type="ChEBI" id="CHEBI:57746"/>
        <dbReference type="EC" id="4.6.1.2"/>
    </reaction>
</comment>
<comment type="cofactor">
    <cofactor evidence="1">
        <name>Mg(2+)</name>
        <dbReference type="ChEBI" id="CHEBI:18420"/>
    </cofactor>
    <cofactor evidence="1">
        <name>Mn(2+)</name>
        <dbReference type="ChEBI" id="CHEBI:29035"/>
    </cofactor>
    <text evidence="1">Also has activity with Mn(2+) (in vitro).</text>
</comment>
<comment type="activity regulation">
    <text evidence="1">Activated by nitric oxide in the presence of magnesium or manganese ions.</text>
</comment>
<comment type="subunit">
    <text evidence="1">The active enzyme is formed by a heterodimer of an alpha and a beta subunit. Heterodimer with GUCY1B1.</text>
</comment>
<comment type="subcellular location">
    <subcellularLocation>
        <location evidence="4">Cytoplasm</location>
    </subcellularLocation>
</comment>
<comment type="miscellaneous">
    <text>There are two types of guanylate cyclases: soluble forms and membrane-associated receptor forms.</text>
</comment>
<comment type="similarity">
    <text evidence="3">Belongs to the adenylyl cyclase class-4/guanylyl cyclase family.</text>
</comment>
<keyword id="KW-0141">cGMP biosynthesis</keyword>
<keyword id="KW-0963">Cytoplasm</keyword>
<keyword id="KW-0903">Direct protein sequencing</keyword>
<keyword id="KW-0342">GTP-binding</keyword>
<keyword id="KW-0456">Lyase</keyword>
<keyword id="KW-0547">Nucleotide-binding</keyword>
<keyword id="KW-0597">Phosphoprotein</keyword>
<keyword id="KW-1185">Reference proteome</keyword>
<feature type="chain" id="PRO_0000074112" description="Guanylate cyclase soluble subunit alpha-1">
    <location>
        <begin position="1"/>
        <end position="690"/>
    </location>
</feature>
<feature type="domain" description="Guanylate cyclase" evidence="3">
    <location>
        <begin position="480"/>
        <end position="607"/>
    </location>
</feature>
<feature type="modified residue" description="Phosphoserine" evidence="2">
    <location>
        <position position="266"/>
    </location>
</feature>
<name>GCYA1_RAT</name>